<proteinExistence type="inferred from homology"/>
<accession>Q5JDJ4</accession>
<protein>
    <recommendedName>
        <fullName evidence="1">Putative nickel-responsive regulator</fullName>
    </recommendedName>
</protein>
<sequence length="138" mass="15805">MKIIRFGVSVPEELLEKFDQIIAEKGYVNRSEAIRDLMRDFIVRHEWEAGDKEVAGTITMLYNHDEADVVKELLDLQHDYLNEIISSIHVHMDEHNCLEVVIVKGKAKRIKEIADRLLSLKGVKHGKLVMTGTGKELV</sequence>
<organism>
    <name type="scientific">Thermococcus kodakarensis (strain ATCC BAA-918 / JCM 12380 / KOD1)</name>
    <name type="common">Pyrococcus kodakaraensis (strain KOD1)</name>
    <dbReference type="NCBI Taxonomy" id="69014"/>
    <lineage>
        <taxon>Archaea</taxon>
        <taxon>Methanobacteriati</taxon>
        <taxon>Methanobacteriota</taxon>
        <taxon>Thermococci</taxon>
        <taxon>Thermococcales</taxon>
        <taxon>Thermococcaceae</taxon>
        <taxon>Thermococcus</taxon>
    </lineage>
</organism>
<dbReference type="EMBL" id="AP006878">
    <property type="protein sequence ID" value="BAD85628.1"/>
    <property type="molecule type" value="Genomic_DNA"/>
</dbReference>
<dbReference type="RefSeq" id="WP_011250390.1">
    <property type="nucleotide sequence ID" value="NC_006624.1"/>
</dbReference>
<dbReference type="SMR" id="Q5JDJ4"/>
<dbReference type="FunCoup" id="Q5JDJ4">
    <property type="interactions" value="1"/>
</dbReference>
<dbReference type="STRING" id="69014.TK1439"/>
<dbReference type="EnsemblBacteria" id="BAD85628">
    <property type="protein sequence ID" value="BAD85628"/>
    <property type="gene ID" value="TK1439"/>
</dbReference>
<dbReference type="GeneID" id="78447962"/>
<dbReference type="KEGG" id="tko:TK1439"/>
<dbReference type="PATRIC" id="fig|69014.16.peg.1401"/>
<dbReference type="eggNOG" id="arCOG01008">
    <property type="taxonomic scope" value="Archaea"/>
</dbReference>
<dbReference type="HOGENOM" id="CLU_113319_1_2_2"/>
<dbReference type="InParanoid" id="Q5JDJ4"/>
<dbReference type="OrthoDB" id="25654at2157"/>
<dbReference type="PhylomeDB" id="Q5JDJ4"/>
<dbReference type="Proteomes" id="UP000000536">
    <property type="component" value="Chromosome"/>
</dbReference>
<dbReference type="GO" id="GO:0003677">
    <property type="term" value="F:DNA binding"/>
    <property type="evidence" value="ECO:0000318"/>
    <property type="project" value="GO_Central"/>
</dbReference>
<dbReference type="GO" id="GO:0003700">
    <property type="term" value="F:DNA-binding transcription factor activity"/>
    <property type="evidence" value="ECO:0007669"/>
    <property type="project" value="UniProtKB-UniRule"/>
</dbReference>
<dbReference type="GO" id="GO:0016151">
    <property type="term" value="F:nickel cation binding"/>
    <property type="evidence" value="ECO:0007669"/>
    <property type="project" value="UniProtKB-UniRule"/>
</dbReference>
<dbReference type="GO" id="GO:0006355">
    <property type="term" value="P:regulation of DNA-templated transcription"/>
    <property type="evidence" value="ECO:0000318"/>
    <property type="project" value="GO_Central"/>
</dbReference>
<dbReference type="GO" id="GO:0010045">
    <property type="term" value="P:response to nickel cation"/>
    <property type="evidence" value="ECO:0007669"/>
    <property type="project" value="InterPro"/>
</dbReference>
<dbReference type="CDD" id="cd22231">
    <property type="entry name" value="RHH_NikR_HicB-like"/>
    <property type="match status" value="1"/>
</dbReference>
<dbReference type="Gene3D" id="3.30.70.1150">
    <property type="entry name" value="ACT-like. Chain A, domain 2"/>
    <property type="match status" value="1"/>
</dbReference>
<dbReference type="Gene3D" id="1.10.1220.10">
    <property type="entry name" value="Met repressor-like"/>
    <property type="match status" value="1"/>
</dbReference>
<dbReference type="HAMAP" id="MF_00476">
    <property type="entry name" value="NikR"/>
    <property type="match status" value="1"/>
</dbReference>
<dbReference type="InterPro" id="IPR027271">
    <property type="entry name" value="Acetolactate_synth/TF_NikR_C"/>
</dbReference>
<dbReference type="InterPro" id="IPR045865">
    <property type="entry name" value="ACT-like_dom_sf"/>
</dbReference>
<dbReference type="InterPro" id="IPR013321">
    <property type="entry name" value="Arc_rbn_hlx_hlx"/>
</dbReference>
<dbReference type="InterPro" id="IPR002145">
    <property type="entry name" value="CopG"/>
</dbReference>
<dbReference type="InterPro" id="IPR050192">
    <property type="entry name" value="CopG/NikR_regulator"/>
</dbReference>
<dbReference type="InterPro" id="IPR022988">
    <property type="entry name" value="Ni_resp_reg_NikR"/>
</dbReference>
<dbReference type="InterPro" id="IPR010985">
    <property type="entry name" value="Ribbon_hlx_hlx"/>
</dbReference>
<dbReference type="InterPro" id="IPR014864">
    <property type="entry name" value="TF_NikR_Ni-bd_C"/>
</dbReference>
<dbReference type="NCBIfam" id="NF001884">
    <property type="entry name" value="PRK00630.1"/>
    <property type="match status" value="1"/>
</dbReference>
<dbReference type="NCBIfam" id="NF002169">
    <property type="entry name" value="PRK01002.1"/>
    <property type="match status" value="1"/>
</dbReference>
<dbReference type="NCBIfam" id="NF002815">
    <property type="entry name" value="PRK02967.1"/>
    <property type="match status" value="1"/>
</dbReference>
<dbReference type="NCBIfam" id="NF003381">
    <property type="entry name" value="PRK04460.1"/>
    <property type="match status" value="1"/>
</dbReference>
<dbReference type="PANTHER" id="PTHR34719">
    <property type="entry name" value="NICKEL-RESPONSIVE REGULATOR"/>
    <property type="match status" value="1"/>
</dbReference>
<dbReference type="PANTHER" id="PTHR34719:SF2">
    <property type="entry name" value="NICKEL-RESPONSIVE REGULATOR"/>
    <property type="match status" value="1"/>
</dbReference>
<dbReference type="Pfam" id="PF08753">
    <property type="entry name" value="NikR_C"/>
    <property type="match status" value="1"/>
</dbReference>
<dbReference type="Pfam" id="PF01402">
    <property type="entry name" value="RHH_1"/>
    <property type="match status" value="1"/>
</dbReference>
<dbReference type="SUPFAM" id="SSF55021">
    <property type="entry name" value="ACT-like"/>
    <property type="match status" value="1"/>
</dbReference>
<dbReference type="SUPFAM" id="SSF47598">
    <property type="entry name" value="Ribbon-helix-helix"/>
    <property type="match status" value="1"/>
</dbReference>
<comment type="function">
    <text evidence="1">Transcriptional regulator.</text>
</comment>
<comment type="cofactor">
    <cofactor evidence="1">
        <name>Ni(2+)</name>
        <dbReference type="ChEBI" id="CHEBI:49786"/>
    </cofactor>
    <text evidence="1">Binds 1 nickel ion per subunit.</text>
</comment>
<comment type="similarity">
    <text evidence="1">Belongs to the transcriptional regulatory CopG/NikR family.</text>
</comment>
<reference key="1">
    <citation type="journal article" date="2005" name="Genome Res.">
        <title>Complete genome sequence of the hyperthermophilic archaeon Thermococcus kodakaraensis KOD1 and comparison with Pyrococcus genomes.</title>
        <authorList>
            <person name="Fukui T."/>
            <person name="Atomi H."/>
            <person name="Kanai T."/>
            <person name="Matsumi R."/>
            <person name="Fujiwara S."/>
            <person name="Imanaka T."/>
        </authorList>
    </citation>
    <scope>NUCLEOTIDE SEQUENCE [LARGE SCALE GENOMIC DNA]</scope>
    <source>
        <strain>ATCC BAA-918 / JCM 12380 / KOD1</strain>
    </source>
</reference>
<keyword id="KW-0238">DNA-binding</keyword>
<keyword id="KW-0479">Metal-binding</keyword>
<keyword id="KW-0533">Nickel</keyword>
<keyword id="KW-1185">Reference proteome</keyword>
<keyword id="KW-0804">Transcription</keyword>
<keyword id="KW-0805">Transcription regulation</keyword>
<evidence type="ECO:0000255" key="1">
    <source>
        <dbReference type="HAMAP-Rule" id="MF_00476"/>
    </source>
</evidence>
<gene>
    <name type="ordered locus">TK1439</name>
</gene>
<feature type="chain" id="PRO_0000139313" description="Putative nickel-responsive regulator">
    <location>
        <begin position="1"/>
        <end position="138"/>
    </location>
</feature>
<feature type="binding site" evidence="1">
    <location>
        <position position="78"/>
    </location>
    <ligand>
        <name>Ni(2+)</name>
        <dbReference type="ChEBI" id="CHEBI:49786"/>
    </ligand>
</feature>
<feature type="binding site" evidence="1">
    <location>
        <position position="89"/>
    </location>
    <ligand>
        <name>Ni(2+)</name>
        <dbReference type="ChEBI" id="CHEBI:49786"/>
    </ligand>
</feature>
<feature type="binding site" evidence="1">
    <location>
        <position position="91"/>
    </location>
    <ligand>
        <name>Ni(2+)</name>
        <dbReference type="ChEBI" id="CHEBI:49786"/>
    </ligand>
</feature>
<feature type="binding site" evidence="1">
    <location>
        <position position="97"/>
    </location>
    <ligand>
        <name>Ni(2+)</name>
        <dbReference type="ChEBI" id="CHEBI:49786"/>
    </ligand>
</feature>
<name>NIKR_THEKO</name>